<feature type="chain" id="PRO_0000049466" description="Uncharacterized protein YbxB">
    <location>
        <begin position="1"/>
        <end position="201"/>
    </location>
</feature>
<keyword id="KW-0489">Methyltransferase</keyword>
<keyword id="KW-1185">Reference proteome</keyword>
<keyword id="KW-0808">Transferase</keyword>
<organism>
    <name type="scientific">Bacillus subtilis (strain 168)</name>
    <dbReference type="NCBI Taxonomy" id="224308"/>
    <lineage>
        <taxon>Bacteria</taxon>
        <taxon>Bacillati</taxon>
        <taxon>Bacillota</taxon>
        <taxon>Bacilli</taxon>
        <taxon>Bacillales</taxon>
        <taxon>Bacillaceae</taxon>
        <taxon>Bacillus</taxon>
    </lineage>
</organism>
<proteinExistence type="inferred from homology"/>
<protein>
    <recommendedName>
        <fullName>Uncharacterized protein YbxB</fullName>
    </recommendedName>
    <alternativeName>
        <fullName>ORF23</fullName>
    </alternativeName>
    <alternativeName>
        <fullName>P23</fullName>
    </alternativeName>
</protein>
<gene>
    <name type="primary">ybxB</name>
    <name type="synonym">ybaA</name>
    <name type="ordered locus">BSU01060</name>
</gene>
<reference key="1">
    <citation type="journal article" date="1995" name="J. Biol. Chem.">
        <title>Genetic and transcriptional organization of the region encoding the beta subunit of Bacillus subtilis RNA polymerase.</title>
        <authorList>
            <person name="Boor K.J."/>
            <person name="Duncan M.L."/>
            <person name="Price C.W."/>
        </authorList>
    </citation>
    <scope>NUCLEOTIDE SEQUENCE [GENOMIC DNA]</scope>
    <source>
        <strain>168 / Marburg / ATCC 6051 / DSM 10 / JCM 1465 / NBRC 13719 / NCIMB 3610 / NRRL NRS-744 / VKM B-501</strain>
    </source>
</reference>
<reference key="2">
    <citation type="journal article" date="1997" name="Nature">
        <title>The complete genome sequence of the Gram-positive bacterium Bacillus subtilis.</title>
        <authorList>
            <person name="Kunst F."/>
            <person name="Ogasawara N."/>
            <person name="Moszer I."/>
            <person name="Albertini A.M."/>
            <person name="Alloni G."/>
            <person name="Azevedo V."/>
            <person name="Bertero M.G."/>
            <person name="Bessieres P."/>
            <person name="Bolotin A."/>
            <person name="Borchert S."/>
            <person name="Borriss R."/>
            <person name="Boursier L."/>
            <person name="Brans A."/>
            <person name="Braun M."/>
            <person name="Brignell S.C."/>
            <person name="Bron S."/>
            <person name="Brouillet S."/>
            <person name="Bruschi C.V."/>
            <person name="Caldwell B."/>
            <person name="Capuano V."/>
            <person name="Carter N.M."/>
            <person name="Choi S.-K."/>
            <person name="Codani J.-J."/>
            <person name="Connerton I.F."/>
            <person name="Cummings N.J."/>
            <person name="Daniel R.A."/>
            <person name="Denizot F."/>
            <person name="Devine K.M."/>
            <person name="Duesterhoeft A."/>
            <person name="Ehrlich S.D."/>
            <person name="Emmerson P.T."/>
            <person name="Entian K.-D."/>
            <person name="Errington J."/>
            <person name="Fabret C."/>
            <person name="Ferrari E."/>
            <person name="Foulger D."/>
            <person name="Fritz C."/>
            <person name="Fujita M."/>
            <person name="Fujita Y."/>
            <person name="Fuma S."/>
            <person name="Galizzi A."/>
            <person name="Galleron N."/>
            <person name="Ghim S.-Y."/>
            <person name="Glaser P."/>
            <person name="Goffeau A."/>
            <person name="Golightly E.J."/>
            <person name="Grandi G."/>
            <person name="Guiseppi G."/>
            <person name="Guy B.J."/>
            <person name="Haga K."/>
            <person name="Haiech J."/>
            <person name="Harwood C.R."/>
            <person name="Henaut A."/>
            <person name="Hilbert H."/>
            <person name="Holsappel S."/>
            <person name="Hosono S."/>
            <person name="Hullo M.-F."/>
            <person name="Itaya M."/>
            <person name="Jones L.-M."/>
            <person name="Joris B."/>
            <person name="Karamata D."/>
            <person name="Kasahara Y."/>
            <person name="Klaerr-Blanchard M."/>
            <person name="Klein C."/>
            <person name="Kobayashi Y."/>
            <person name="Koetter P."/>
            <person name="Koningstein G."/>
            <person name="Krogh S."/>
            <person name="Kumano M."/>
            <person name="Kurita K."/>
            <person name="Lapidus A."/>
            <person name="Lardinois S."/>
            <person name="Lauber J."/>
            <person name="Lazarevic V."/>
            <person name="Lee S.-M."/>
            <person name="Levine A."/>
            <person name="Liu H."/>
            <person name="Masuda S."/>
            <person name="Mauel C."/>
            <person name="Medigue C."/>
            <person name="Medina N."/>
            <person name="Mellado R.P."/>
            <person name="Mizuno M."/>
            <person name="Moestl D."/>
            <person name="Nakai S."/>
            <person name="Noback M."/>
            <person name="Noone D."/>
            <person name="O'Reilly M."/>
            <person name="Ogawa K."/>
            <person name="Ogiwara A."/>
            <person name="Oudega B."/>
            <person name="Park S.-H."/>
            <person name="Parro V."/>
            <person name="Pohl T.M."/>
            <person name="Portetelle D."/>
            <person name="Porwollik S."/>
            <person name="Prescott A.M."/>
            <person name="Presecan E."/>
            <person name="Pujic P."/>
            <person name="Purnelle B."/>
            <person name="Rapoport G."/>
            <person name="Rey M."/>
            <person name="Reynolds S."/>
            <person name="Rieger M."/>
            <person name="Rivolta C."/>
            <person name="Rocha E."/>
            <person name="Roche B."/>
            <person name="Rose M."/>
            <person name="Sadaie Y."/>
            <person name="Sato T."/>
            <person name="Scanlan E."/>
            <person name="Schleich S."/>
            <person name="Schroeter R."/>
            <person name="Scoffone F."/>
            <person name="Sekiguchi J."/>
            <person name="Sekowska A."/>
            <person name="Seror S.J."/>
            <person name="Serror P."/>
            <person name="Shin B.-S."/>
            <person name="Soldo B."/>
            <person name="Sorokin A."/>
            <person name="Tacconi E."/>
            <person name="Takagi T."/>
            <person name="Takahashi H."/>
            <person name="Takemaru K."/>
            <person name="Takeuchi M."/>
            <person name="Tamakoshi A."/>
            <person name="Tanaka T."/>
            <person name="Terpstra P."/>
            <person name="Tognoni A."/>
            <person name="Tosato V."/>
            <person name="Uchiyama S."/>
            <person name="Vandenbol M."/>
            <person name="Vannier F."/>
            <person name="Vassarotti A."/>
            <person name="Viari A."/>
            <person name="Wambutt R."/>
            <person name="Wedler E."/>
            <person name="Wedler H."/>
            <person name="Weitzenegger T."/>
            <person name="Winters P."/>
            <person name="Wipat A."/>
            <person name="Yamamoto H."/>
            <person name="Yamane K."/>
            <person name="Yasumoto K."/>
            <person name="Yata K."/>
            <person name="Yoshida K."/>
            <person name="Yoshikawa H.-F."/>
            <person name="Zumstein E."/>
            <person name="Yoshikawa H."/>
            <person name="Danchin A."/>
        </authorList>
    </citation>
    <scope>NUCLEOTIDE SEQUENCE [LARGE SCALE GENOMIC DNA]</scope>
    <source>
        <strain>168</strain>
    </source>
</reference>
<name>YBXB_BACSU</name>
<comment type="similarity">
    <text evidence="1">Belongs to the methyltransferase superfamily.</text>
</comment>
<dbReference type="EMBL" id="L24376">
    <property type="protein sequence ID" value="AAB00971.1"/>
    <property type="molecule type" value="Genomic_DNA"/>
</dbReference>
<dbReference type="EMBL" id="AL009126">
    <property type="protein sequence ID" value="CAB11882.1"/>
    <property type="molecule type" value="Genomic_DNA"/>
</dbReference>
<dbReference type="PIR" id="F69751">
    <property type="entry name" value="F69751"/>
</dbReference>
<dbReference type="RefSeq" id="WP_003235045.1">
    <property type="nucleotide sequence ID" value="NZ_OZ025638.1"/>
</dbReference>
<dbReference type="SMR" id="P37872"/>
<dbReference type="FunCoup" id="P37872">
    <property type="interactions" value="157"/>
</dbReference>
<dbReference type="STRING" id="224308.BSU01060"/>
<dbReference type="PaxDb" id="224308-BSU01060"/>
<dbReference type="EnsemblBacteria" id="CAB11882">
    <property type="protein sequence ID" value="CAB11882"/>
    <property type="gene ID" value="BSU_01060"/>
</dbReference>
<dbReference type="GeneID" id="938465"/>
<dbReference type="KEGG" id="bsu:BSU01060"/>
<dbReference type="PATRIC" id="fig|224308.179.peg.109"/>
<dbReference type="eggNOG" id="COG2813">
    <property type="taxonomic scope" value="Bacteria"/>
</dbReference>
<dbReference type="InParanoid" id="P37872"/>
<dbReference type="OrthoDB" id="9764961at2"/>
<dbReference type="PhylomeDB" id="P37872"/>
<dbReference type="BioCyc" id="BSUB:BSU01060-MONOMER"/>
<dbReference type="Proteomes" id="UP000001570">
    <property type="component" value="Chromosome"/>
</dbReference>
<dbReference type="GO" id="GO:0008990">
    <property type="term" value="F:rRNA (guanine-N2-)-methyltransferase activity"/>
    <property type="evidence" value="ECO:0000318"/>
    <property type="project" value="GO_Central"/>
</dbReference>
<dbReference type="GO" id="GO:0070475">
    <property type="term" value="P:rRNA base methylation"/>
    <property type="evidence" value="ECO:0000318"/>
    <property type="project" value="GO_Central"/>
</dbReference>
<dbReference type="CDD" id="cd02440">
    <property type="entry name" value="AdoMet_MTases"/>
    <property type="match status" value="1"/>
</dbReference>
<dbReference type="Gene3D" id="3.40.50.150">
    <property type="entry name" value="Vaccinia Virus protein VP39"/>
    <property type="match status" value="1"/>
</dbReference>
<dbReference type="InterPro" id="IPR046977">
    <property type="entry name" value="RsmC/RlmG"/>
</dbReference>
<dbReference type="InterPro" id="IPR029063">
    <property type="entry name" value="SAM-dependent_MTases_sf"/>
</dbReference>
<dbReference type="InterPro" id="IPR007848">
    <property type="entry name" value="Small_mtfrase_dom"/>
</dbReference>
<dbReference type="PANTHER" id="PTHR47816">
    <property type="entry name" value="RIBOSOMAL RNA SMALL SUBUNIT METHYLTRANSFERASE C"/>
    <property type="match status" value="1"/>
</dbReference>
<dbReference type="PANTHER" id="PTHR47816:SF4">
    <property type="entry name" value="RIBOSOMAL RNA SMALL SUBUNIT METHYLTRANSFERASE C"/>
    <property type="match status" value="1"/>
</dbReference>
<dbReference type="Pfam" id="PF05175">
    <property type="entry name" value="MTS"/>
    <property type="match status" value="1"/>
</dbReference>
<dbReference type="SUPFAM" id="SSF53335">
    <property type="entry name" value="S-adenosyl-L-methionine-dependent methyltransferases"/>
    <property type="match status" value="1"/>
</dbReference>
<evidence type="ECO:0000305" key="1"/>
<accession>P37872</accession>
<sequence>MSEHYYSEKPSVKSNKQTWSFRLRNKDFTFTSDSGVFSKKEVDFGSRLLIDSFEEPEVEGGILDVGCGYGPIGLSLASDFKDRTIHMIDVNERAVELSNENAEQNGITNVKIYQSDLFSNVDSAQTFASILTNPPIRAGKKVVHAIFEKSAEHLKASGELWIVIQKKQGAPSAIEKLEELFDEVSVVQKKKGYYIIKAKKV</sequence>